<name>PNG1_YEAST</name>
<keyword id="KW-0002">3D-structure</keyword>
<keyword id="KW-0963">Cytoplasm</keyword>
<keyword id="KW-0378">Hydrolase</keyword>
<keyword id="KW-0479">Metal-binding</keyword>
<keyword id="KW-0539">Nucleus</keyword>
<keyword id="KW-1185">Reference proteome</keyword>
<keyword id="KW-0862">Zinc</keyword>
<sequence length="363" mass="42485">MGEVYEKNNIDFDSIAKMLLIKYKDFILSKFKKAAPVENIRFQNLVHTNQFAQGVLGQSQHLCTVYDNPSWHSIVLETLDLDLIYKNVDKEFAKDGHAEGENIYTDYLVKELLRYFKQDFFKWCNKPDCNHCGQNTSENMTPLGSQGPNGEESKFNCGTVEIYKCNRCGNITRFPRYNDPIKLLETRKGRCGEWCNLFTLILKSFGLDVRYVWNREDHVWCEYFSNFLNRWVHVDSCEQSFDQPYIYSINWNKKMSYCIAFGKDGVVDVSKRYILQNELPRDQIKEEDLKFLCQFITKRLRYSLNDDEIYQLACRDEQEQIELIRGKTQETKSESVSAASKSSNRGRESGSADWKAQRGEDGK</sequence>
<feature type="chain" id="PRO_0000248996" description="Peptide-N(4)-(N-acetyl-beta-glucosaminyl)asparagine amidase">
    <location>
        <begin position="1"/>
        <end position="363"/>
    </location>
</feature>
<feature type="region of interest" description="Disordered" evidence="1">
    <location>
        <begin position="325"/>
        <end position="363"/>
    </location>
</feature>
<feature type="compositionally biased region" description="Low complexity" evidence="1">
    <location>
        <begin position="334"/>
        <end position="343"/>
    </location>
</feature>
<feature type="compositionally biased region" description="Basic and acidic residues" evidence="1">
    <location>
        <begin position="345"/>
        <end position="363"/>
    </location>
</feature>
<feature type="active site" description="Nucleophile">
    <location>
        <position position="191"/>
    </location>
</feature>
<feature type="active site">
    <location>
        <position position="218"/>
    </location>
</feature>
<feature type="active site">
    <location>
        <position position="235"/>
    </location>
</feature>
<feature type="binding site">
    <location>
        <position position="129"/>
    </location>
    <ligand>
        <name>Zn(2+)</name>
        <dbReference type="ChEBI" id="CHEBI:29105"/>
    </ligand>
</feature>
<feature type="binding site">
    <location>
        <position position="132"/>
    </location>
    <ligand>
        <name>Zn(2+)</name>
        <dbReference type="ChEBI" id="CHEBI:29105"/>
    </ligand>
</feature>
<feature type="binding site">
    <location>
        <position position="165"/>
    </location>
    <ligand>
        <name>Zn(2+)</name>
        <dbReference type="ChEBI" id="CHEBI:29105"/>
    </ligand>
</feature>
<feature type="binding site">
    <location>
        <position position="168"/>
    </location>
    <ligand>
        <name>Zn(2+)</name>
        <dbReference type="ChEBI" id="CHEBI:29105"/>
    </ligand>
</feature>
<feature type="binding site">
    <location>
        <position position="238"/>
    </location>
    <ligand>
        <name>substrate</name>
    </ligand>
</feature>
<feature type="mutagenesis site" description="No effect." evidence="4">
    <original>W</original>
    <variation>A</variation>
    <location>
        <position position="123"/>
    </location>
</feature>
<feature type="mutagenesis site" description="Abolishes enzyme activity." evidence="4">
    <original>C</original>
    <variation>A</variation>
    <variation>S</variation>
    <location>
        <position position="129"/>
    </location>
</feature>
<feature type="mutagenesis site" description="Abolishes enzyme activity." evidence="4">
    <original>C</original>
    <variation>A</variation>
    <variation>S</variation>
    <location>
        <position position="132"/>
    </location>
</feature>
<feature type="mutagenesis site" description="Abolishes enzyme activity." evidence="4">
    <original>C</original>
    <variation>A</variation>
    <variation>S</variation>
    <location>
        <position position="165"/>
    </location>
</feature>
<feature type="mutagenesis site" description="Abolishes enzyme activity." evidence="4">
    <original>C</original>
    <variation>A</variation>
    <variation>S</variation>
    <location>
        <position position="168"/>
    </location>
</feature>
<feature type="mutagenesis site" description="No effect." evidence="4">
    <original>F</original>
    <variation>A</variation>
    <location>
        <position position="174"/>
    </location>
</feature>
<feature type="mutagenesis site" description="No effect." evidence="4">
    <original>Y</original>
    <variation>A</variation>
    <location>
        <position position="177"/>
    </location>
</feature>
<feature type="mutagenesis site" description="No effect." evidence="4">
    <original>R</original>
    <variation>A</variation>
    <location>
        <position position="187"/>
    </location>
</feature>
<feature type="mutagenesis site" description="No effect." evidence="4">
    <original>G</original>
    <variation>A</variation>
    <location>
        <position position="189"/>
    </location>
</feature>
<feature type="mutagenesis site" description="Abolishes enzyme activity." evidence="4">
    <original>C</original>
    <variation>A</variation>
    <location>
        <position position="191"/>
    </location>
</feature>
<feature type="mutagenesis site" description="No effect." evidence="4">
    <original>W</original>
    <variation>A</variation>
    <location>
        <position position="194"/>
    </location>
</feature>
<feature type="mutagenesis site" description="No effect." evidence="4">
    <original>F</original>
    <variation>A</variation>
    <location>
        <position position="198"/>
    </location>
</feature>
<feature type="mutagenesis site" description="No effect." evidence="4">
    <original>T</original>
    <variation>A</variation>
    <location>
        <position position="199"/>
    </location>
</feature>
<feature type="mutagenesis site" description="No effect." evidence="4">
    <original>K</original>
    <variation>A</variation>
    <location>
        <position position="203"/>
    </location>
</feature>
<feature type="mutagenesis site" description="No effect." evidence="4">
    <original>G</original>
    <variation>A</variation>
    <location>
        <position position="206"/>
    </location>
</feature>
<feature type="mutagenesis site" description="Abolishes enzyme activity." evidence="4">
    <original>R</original>
    <variation>A</variation>
    <location>
        <position position="210"/>
    </location>
</feature>
<feature type="mutagenesis site" description="No effect." evidence="4">
    <original>V</original>
    <variation>A</variation>
    <location>
        <position position="212"/>
    </location>
</feature>
<feature type="mutagenesis site" description="Abolishes enzyme activity." evidence="2 4">
    <original>H</original>
    <variation>A</variation>
    <location>
        <position position="218"/>
    </location>
</feature>
<feature type="mutagenesis site" description="In png1-1; abolishes enzyme activity." evidence="2 4">
    <original>H</original>
    <variation>Y</variation>
    <location>
        <position position="218"/>
    </location>
</feature>
<feature type="mutagenesis site" description="Abolishes enzyme activity." evidence="4">
    <original>W</original>
    <variation>A</variation>
    <location>
        <position position="220"/>
    </location>
</feature>
<feature type="mutagenesis site" description="No effect." evidence="4">
    <original>W</original>
    <variation>F</variation>
    <location>
        <position position="220"/>
    </location>
</feature>
<feature type="mutagenesis site" description="Abolishes enzyme activity." evidence="4">
    <original>E</original>
    <variation>A</variation>
    <location>
        <position position="222"/>
    </location>
</feature>
<feature type="mutagenesis site" description="No effect." evidence="4">
    <original>F</original>
    <variation>A</variation>
    <location>
        <position position="224"/>
    </location>
</feature>
<feature type="mutagenesis site" description="No effect." evidence="4">
    <original>R</original>
    <variation>A</variation>
    <location>
        <position position="230"/>
    </location>
</feature>
<feature type="mutagenesis site" description="Abolishes enzyme activity.">
    <original>W</original>
    <variation>A</variation>
    <location>
        <position position="231"/>
    </location>
</feature>
<feature type="mutagenesis site" description="No effect.">
    <original>W</original>
    <variation>F</variation>
    <location>
        <position position="231"/>
    </location>
</feature>
<feature type="mutagenesis site" description="No effect." evidence="4">
    <original>V</original>
    <variation>A</variation>
    <location>
        <position position="234"/>
    </location>
</feature>
<feature type="mutagenesis site" description="Abolishes enzyme activity." evidence="4">
    <original>D</original>
    <variation>A</variation>
    <location>
        <position position="235"/>
    </location>
</feature>
<feature type="mutagenesis site" description="No effect." evidence="4">
    <original>D</original>
    <variation>A</variation>
    <location>
        <position position="242"/>
    </location>
</feature>
<feature type="mutagenesis site" description="No effect." evidence="4">
    <original>W</original>
    <variation>A</variation>
    <location>
        <position position="251"/>
    </location>
</feature>
<feature type="mutagenesis site" description="No effect." evidence="4">
    <original>K</original>
    <variation>A</variation>
    <location>
        <position position="253"/>
    </location>
</feature>
<feature type="mutagenesis site" description="Abolishes enzyme activity." evidence="4">
    <original>Y</original>
    <variation>A</variation>
    <location>
        <position position="257"/>
    </location>
</feature>
<feature type="mutagenesis site" description="Abolishes enzyme activity." evidence="4">
    <original>F</original>
    <variation>A</variation>
    <location>
        <position position="261"/>
    </location>
</feature>
<feature type="mutagenesis site" description="No effect." evidence="4">
    <original>D</original>
    <variation>A</variation>
    <location>
        <position position="264"/>
    </location>
</feature>
<feature type="mutagenesis site" description="No effect." evidence="4">
    <original>V</original>
    <variation>A</variation>
    <location>
        <position position="266"/>
    </location>
</feature>
<feature type="mutagenesis site" description="Abolishes enzyme activity." evidence="4">
    <original>D</original>
    <variation>A</variation>
    <location>
        <position position="268"/>
    </location>
</feature>
<feature type="mutagenesis site" description="Abolishes enzyme activity." evidence="4">
    <original>Y</original>
    <variation>A</variation>
    <location>
        <position position="273"/>
    </location>
</feature>
<feature type="mutagenesis site" description="No effect." evidence="4">
    <original>R</original>
    <variation>A</variation>
    <location>
        <position position="281"/>
    </location>
</feature>
<feature type="mutagenesis site" description="No effect." evidence="4">
    <original>R</original>
    <variation>A</variation>
    <location>
        <position position="347"/>
    </location>
</feature>
<feature type="mutagenesis site" description="No effect." evidence="4">
    <original>W</original>
    <variation>A</variation>
    <location>
        <position position="354"/>
    </location>
</feature>
<feature type="mutagenesis site" description="No effect." evidence="4">
    <original>R</original>
    <variation>A</variation>
    <location>
        <position position="358"/>
    </location>
</feature>
<feature type="helix" evidence="18">
    <location>
        <begin position="13"/>
        <end position="30"/>
    </location>
</feature>
<feature type="strand" evidence="17">
    <location>
        <begin position="31"/>
        <end position="33"/>
    </location>
</feature>
<feature type="helix" evidence="18">
    <location>
        <begin position="36"/>
        <end position="48"/>
    </location>
</feature>
<feature type="helix" evidence="18">
    <location>
        <begin position="50"/>
        <end position="65"/>
    </location>
</feature>
<feature type="helix" evidence="18">
    <location>
        <begin position="69"/>
        <end position="78"/>
    </location>
</feature>
<feature type="helix" evidence="18">
    <location>
        <begin position="81"/>
        <end position="94"/>
    </location>
</feature>
<feature type="strand" evidence="18">
    <location>
        <begin position="97"/>
        <end position="100"/>
    </location>
</feature>
<feature type="helix" evidence="18">
    <location>
        <begin position="103"/>
        <end position="118"/>
    </location>
</feature>
<feature type="strand" evidence="18">
    <location>
        <begin position="130"/>
        <end position="132"/>
    </location>
</feature>
<feature type="strand" evidence="18">
    <location>
        <begin position="138"/>
        <end position="146"/>
    </location>
</feature>
<feature type="helix" evidence="18">
    <location>
        <begin position="151"/>
        <end position="153"/>
    </location>
</feature>
<feature type="strand" evidence="18">
    <location>
        <begin position="154"/>
        <end position="165"/>
    </location>
</feature>
<feature type="turn" evidence="18">
    <location>
        <begin position="166"/>
        <end position="168"/>
    </location>
</feature>
<feature type="strand" evidence="18">
    <location>
        <begin position="171"/>
        <end position="177"/>
    </location>
</feature>
<feature type="helix" evidence="18">
    <location>
        <begin position="180"/>
        <end position="186"/>
    </location>
</feature>
<feature type="helix" evidence="18">
    <location>
        <begin position="191"/>
        <end position="203"/>
    </location>
</feature>
<feature type="turn" evidence="18">
    <location>
        <begin position="204"/>
        <end position="206"/>
    </location>
</feature>
<feature type="strand" evidence="18">
    <location>
        <begin position="209"/>
        <end position="214"/>
    </location>
</feature>
<feature type="turn" evidence="18">
    <location>
        <begin position="215"/>
        <end position="217"/>
    </location>
</feature>
<feature type="strand" evidence="18">
    <location>
        <begin position="218"/>
        <end position="225"/>
    </location>
</feature>
<feature type="turn" evidence="18">
    <location>
        <begin position="226"/>
        <end position="229"/>
    </location>
</feature>
<feature type="strand" evidence="18">
    <location>
        <begin position="230"/>
        <end position="235"/>
    </location>
</feature>
<feature type="turn" evidence="18">
    <location>
        <begin position="236"/>
        <end position="239"/>
    </location>
</feature>
<feature type="strand" evidence="18">
    <location>
        <begin position="240"/>
        <end position="242"/>
    </location>
</feature>
<feature type="helix" evidence="18">
    <location>
        <begin position="246"/>
        <end position="250"/>
    </location>
</feature>
<feature type="strand" evidence="18">
    <location>
        <begin position="258"/>
        <end position="262"/>
    </location>
</feature>
<feature type="strand" evidence="18">
    <location>
        <begin position="265"/>
        <end position="268"/>
    </location>
</feature>
<feature type="helix" evidence="18">
    <location>
        <begin position="270"/>
        <end position="273"/>
    </location>
</feature>
<feature type="strand" evidence="18">
    <location>
        <begin position="275"/>
        <end position="278"/>
    </location>
</feature>
<feature type="helix" evidence="18">
    <location>
        <begin position="286"/>
        <end position="301"/>
    </location>
</feature>
<feature type="helix" evidence="18">
    <location>
        <begin position="306"/>
        <end position="324"/>
    </location>
</feature>
<feature type="strand" evidence="19">
    <location>
        <begin position="325"/>
        <end position="327"/>
    </location>
</feature>
<dbReference type="EC" id="3.5.1.52"/>
<dbReference type="EMBL" id="U43281">
    <property type="protein sequence ID" value="AAB68203.1"/>
    <property type="molecule type" value="Genomic_DNA"/>
</dbReference>
<dbReference type="EMBL" id="BK006949">
    <property type="protein sequence ID" value="DAA11337.1"/>
    <property type="molecule type" value="Genomic_DNA"/>
</dbReference>
<dbReference type="PIR" id="S61970">
    <property type="entry name" value="S61970"/>
</dbReference>
<dbReference type="RefSeq" id="NP_015229.1">
    <property type="nucleotide sequence ID" value="NM_001183910.1"/>
</dbReference>
<dbReference type="PDB" id="1X3W">
    <property type="method" value="X-ray"/>
    <property type="resolution" value="3.00 A"/>
    <property type="chains" value="A=8-342"/>
</dbReference>
<dbReference type="PDB" id="1X3Z">
    <property type="method" value="X-ray"/>
    <property type="resolution" value="2.80 A"/>
    <property type="chains" value="A=8-342"/>
</dbReference>
<dbReference type="PDB" id="3ESW">
    <property type="method" value="X-ray"/>
    <property type="resolution" value="3.40 A"/>
    <property type="chains" value="A=8-341"/>
</dbReference>
<dbReference type="PDBsum" id="1X3W"/>
<dbReference type="PDBsum" id="1X3Z"/>
<dbReference type="PDBsum" id="3ESW"/>
<dbReference type="SMR" id="Q02890"/>
<dbReference type="BioGRID" id="36085">
    <property type="interactions" value="73"/>
</dbReference>
<dbReference type="ComplexPortal" id="CPX-1320">
    <property type="entry name" value="Peptide:N-glycanase-Rad23 complex"/>
</dbReference>
<dbReference type="DIP" id="DIP-4008N"/>
<dbReference type="FunCoup" id="Q02890">
    <property type="interactions" value="137"/>
</dbReference>
<dbReference type="IntAct" id="Q02890">
    <property type="interactions" value="7"/>
</dbReference>
<dbReference type="MINT" id="Q02890"/>
<dbReference type="STRING" id="4932.YPL096W"/>
<dbReference type="iPTMnet" id="Q02890"/>
<dbReference type="PaxDb" id="4932-YPL096W"/>
<dbReference type="PeptideAtlas" id="Q02890"/>
<dbReference type="EnsemblFungi" id="YPL096W_mRNA">
    <property type="protein sequence ID" value="YPL096W"/>
    <property type="gene ID" value="YPL096W"/>
</dbReference>
<dbReference type="GeneID" id="856009"/>
<dbReference type="KEGG" id="sce:YPL096W"/>
<dbReference type="AGR" id="SGD:S000006017"/>
<dbReference type="SGD" id="S000006017">
    <property type="gene designation" value="PNG1"/>
</dbReference>
<dbReference type="VEuPathDB" id="FungiDB:YPL096W"/>
<dbReference type="eggNOG" id="KOG0909">
    <property type="taxonomic scope" value="Eukaryota"/>
</dbReference>
<dbReference type="GeneTree" id="ENSGT00390000006540"/>
<dbReference type="HOGENOM" id="CLU_031058_0_1_1"/>
<dbReference type="InParanoid" id="Q02890"/>
<dbReference type="OMA" id="AWDKPRL"/>
<dbReference type="OrthoDB" id="409136at2759"/>
<dbReference type="BioCyc" id="MetaCyc:YPL096W-MONOMER"/>
<dbReference type="BioCyc" id="YEAST:YPL096W-MONOMER"/>
<dbReference type="BRENDA" id="3.5.1.52">
    <property type="organism ID" value="984"/>
</dbReference>
<dbReference type="SABIO-RK" id="Q02890"/>
<dbReference type="BioGRID-ORCS" id="856009">
    <property type="hits" value="0 hits in 10 CRISPR screens"/>
</dbReference>
<dbReference type="EvolutionaryTrace" id="Q02890"/>
<dbReference type="PRO" id="PR:Q02890"/>
<dbReference type="Proteomes" id="UP000002311">
    <property type="component" value="Chromosome XVI"/>
</dbReference>
<dbReference type="RNAct" id="Q02890">
    <property type="molecule type" value="protein"/>
</dbReference>
<dbReference type="GO" id="GO:0005737">
    <property type="term" value="C:cytoplasm"/>
    <property type="evidence" value="ECO:0000314"/>
    <property type="project" value="ComplexPortal"/>
</dbReference>
<dbReference type="GO" id="GO:0005829">
    <property type="term" value="C:cytosol"/>
    <property type="evidence" value="ECO:0000314"/>
    <property type="project" value="SGD"/>
</dbReference>
<dbReference type="GO" id="GO:0005739">
    <property type="term" value="C:mitochondrion"/>
    <property type="evidence" value="ECO:0007005"/>
    <property type="project" value="SGD"/>
</dbReference>
<dbReference type="GO" id="GO:0005634">
    <property type="term" value="C:nucleus"/>
    <property type="evidence" value="ECO:0000314"/>
    <property type="project" value="SGD"/>
</dbReference>
<dbReference type="GO" id="GO:0120125">
    <property type="term" value="C:PNGase complex"/>
    <property type="evidence" value="ECO:0000353"/>
    <property type="project" value="ComplexPortal"/>
</dbReference>
<dbReference type="GO" id="GO:0046872">
    <property type="term" value="F:metal ion binding"/>
    <property type="evidence" value="ECO:0007669"/>
    <property type="project" value="UniProtKB-KW"/>
</dbReference>
<dbReference type="GO" id="GO:0000224">
    <property type="term" value="F:peptide-N4-(N-acetyl-beta-glucosaminyl)asparagine amidase activity"/>
    <property type="evidence" value="ECO:0000314"/>
    <property type="project" value="SGD"/>
</dbReference>
<dbReference type="GO" id="GO:0036503">
    <property type="term" value="P:ERAD pathway"/>
    <property type="evidence" value="ECO:0000314"/>
    <property type="project" value="ComplexPortal"/>
</dbReference>
<dbReference type="GO" id="GO:0006515">
    <property type="term" value="P:protein quality control for misfolded or incompletely synthesized proteins"/>
    <property type="evidence" value="ECO:0000315"/>
    <property type="project" value="SGD"/>
</dbReference>
<dbReference type="GO" id="GO:0097466">
    <property type="term" value="P:ubiquitin-dependent glycoprotein ERAD pathway"/>
    <property type="evidence" value="ECO:0000315"/>
    <property type="project" value="SGD"/>
</dbReference>
<dbReference type="FunFam" id="3.10.620.30:FF:000004">
    <property type="entry name" value="Peptidase (PNG1)"/>
    <property type="match status" value="1"/>
</dbReference>
<dbReference type="FunFam" id="2.20.25.10:FF:000011">
    <property type="entry name" value="peptide-N(4)-(N-acetyl-beta- glucosaminyl)asparagine amidase"/>
    <property type="match status" value="1"/>
</dbReference>
<dbReference type="Gene3D" id="2.20.25.10">
    <property type="match status" value="1"/>
</dbReference>
<dbReference type="Gene3D" id="3.10.620.30">
    <property type="match status" value="1"/>
</dbReference>
<dbReference type="Gene3D" id="6.10.250.270">
    <property type="match status" value="1"/>
</dbReference>
<dbReference type="InterPro" id="IPR038765">
    <property type="entry name" value="Papain-like_cys_pep_sf"/>
</dbReference>
<dbReference type="InterPro" id="IPR050883">
    <property type="entry name" value="PNGase"/>
</dbReference>
<dbReference type="InterPro" id="IPR002931">
    <property type="entry name" value="Transglutaminase-like"/>
</dbReference>
<dbReference type="PANTHER" id="PTHR12143">
    <property type="entry name" value="PEPTIDE N-GLYCANASE PNGASE -RELATED"/>
    <property type="match status" value="1"/>
</dbReference>
<dbReference type="PANTHER" id="PTHR12143:SF19">
    <property type="entry name" value="PEPTIDE-N(4)-(N-ACETYL-BETA-GLUCOSAMINYL)ASPARAGINE AMIDASE"/>
    <property type="match status" value="1"/>
</dbReference>
<dbReference type="Pfam" id="PF01841">
    <property type="entry name" value="Transglut_core"/>
    <property type="match status" value="1"/>
</dbReference>
<dbReference type="SMART" id="SM00460">
    <property type="entry name" value="TGc"/>
    <property type="match status" value="1"/>
</dbReference>
<dbReference type="SUPFAM" id="SSF54001">
    <property type="entry name" value="Cysteine proteinases"/>
    <property type="match status" value="1"/>
</dbReference>
<reference key="1">
    <citation type="journal article" date="1997" name="Nature">
        <title>The nucleotide sequence of Saccharomyces cerevisiae chromosome XVI.</title>
        <authorList>
            <person name="Bussey H."/>
            <person name="Storms R.K."/>
            <person name="Ahmed A."/>
            <person name="Albermann K."/>
            <person name="Allen E."/>
            <person name="Ansorge W."/>
            <person name="Araujo R."/>
            <person name="Aparicio A."/>
            <person name="Barrell B.G."/>
            <person name="Badcock K."/>
            <person name="Benes V."/>
            <person name="Botstein D."/>
            <person name="Bowman S."/>
            <person name="Brueckner M."/>
            <person name="Carpenter J."/>
            <person name="Cherry J.M."/>
            <person name="Chung E."/>
            <person name="Churcher C.M."/>
            <person name="Coster F."/>
            <person name="Davis K."/>
            <person name="Davis R.W."/>
            <person name="Dietrich F.S."/>
            <person name="Delius H."/>
            <person name="DiPaolo T."/>
            <person name="Dubois E."/>
            <person name="Duesterhoeft A."/>
            <person name="Duncan M."/>
            <person name="Floeth M."/>
            <person name="Fortin N."/>
            <person name="Friesen J.D."/>
            <person name="Fritz C."/>
            <person name="Goffeau A."/>
            <person name="Hall J."/>
            <person name="Hebling U."/>
            <person name="Heumann K."/>
            <person name="Hilbert H."/>
            <person name="Hillier L.W."/>
            <person name="Hunicke-Smith S."/>
            <person name="Hyman R.W."/>
            <person name="Johnston M."/>
            <person name="Kalman S."/>
            <person name="Kleine K."/>
            <person name="Komp C."/>
            <person name="Kurdi O."/>
            <person name="Lashkari D."/>
            <person name="Lew H."/>
            <person name="Lin A."/>
            <person name="Lin D."/>
            <person name="Louis E.J."/>
            <person name="Marathe R."/>
            <person name="Messenguy F."/>
            <person name="Mewes H.-W."/>
            <person name="Mirtipati S."/>
            <person name="Moestl D."/>
            <person name="Mueller-Auer S."/>
            <person name="Namath A."/>
            <person name="Nentwich U."/>
            <person name="Oefner P."/>
            <person name="Pearson D."/>
            <person name="Petel F.X."/>
            <person name="Pohl T.M."/>
            <person name="Purnelle B."/>
            <person name="Rajandream M.A."/>
            <person name="Rechmann S."/>
            <person name="Rieger M."/>
            <person name="Riles L."/>
            <person name="Roberts D."/>
            <person name="Schaefer M."/>
            <person name="Scharfe M."/>
            <person name="Scherens B."/>
            <person name="Schramm S."/>
            <person name="Schroeder M."/>
            <person name="Sdicu A.-M."/>
            <person name="Tettelin H."/>
            <person name="Urrestarazu L.A."/>
            <person name="Ushinsky S."/>
            <person name="Vierendeels F."/>
            <person name="Vissers S."/>
            <person name="Voss H."/>
            <person name="Walsh S.V."/>
            <person name="Wambutt R."/>
            <person name="Wang Y."/>
            <person name="Wedler E."/>
            <person name="Wedler H."/>
            <person name="Winnett E."/>
            <person name="Zhong W.-W."/>
            <person name="Zollner A."/>
            <person name="Vo D.H."/>
            <person name="Hani J."/>
        </authorList>
    </citation>
    <scope>NUCLEOTIDE SEQUENCE [LARGE SCALE GENOMIC DNA]</scope>
    <source>
        <strain>ATCC 204508 / S288c</strain>
    </source>
</reference>
<reference key="2">
    <citation type="journal article" date="2014" name="G3 (Bethesda)">
        <title>The reference genome sequence of Saccharomyces cerevisiae: Then and now.</title>
        <authorList>
            <person name="Engel S.R."/>
            <person name="Dietrich F.S."/>
            <person name="Fisk D.G."/>
            <person name="Binkley G."/>
            <person name="Balakrishnan R."/>
            <person name="Costanzo M.C."/>
            <person name="Dwight S.S."/>
            <person name="Hitz B.C."/>
            <person name="Karra K."/>
            <person name="Nash R.S."/>
            <person name="Weng S."/>
            <person name="Wong E.D."/>
            <person name="Lloyd P."/>
            <person name="Skrzypek M.S."/>
            <person name="Miyasato S.R."/>
            <person name="Simison M."/>
            <person name="Cherry J.M."/>
        </authorList>
    </citation>
    <scope>GENOME REANNOTATION</scope>
    <source>
        <strain>ATCC 204508 / S288c</strain>
    </source>
</reference>
<reference key="3">
    <citation type="journal article" date="2000" name="J. Cell Biol.">
        <title>PNG1, a yeast gene encoding a highly conserved peptide:N-glycanase.</title>
        <authorList>
            <person name="Suzuki T."/>
            <person name="Park H."/>
            <person name="Hollingsworth N.M."/>
            <person name="Sternglanz R."/>
            <person name="Lennarz W.J."/>
        </authorList>
    </citation>
    <scope>FUNCTION</scope>
    <scope>SUBCELLULAR LOCATION</scope>
    <scope>MUTAGENESIS OF HIS-218</scope>
</reference>
<reference key="4">
    <citation type="journal article" date="2001" name="J. Biol. Chem.">
        <title>Rad23 provides a link between the Png1 deglycosylating enzyme and the 26 S proteasome in yeast.</title>
        <authorList>
            <person name="Suzuki T."/>
            <person name="Park H."/>
            <person name="Kwofie M.A."/>
            <person name="Lennarz W.J."/>
        </authorList>
    </citation>
    <scope>INTERACTION WITH RAD23</scope>
</reference>
<reference key="5">
    <citation type="journal article" date="2002" name="J. Biol. Chem.">
        <title>Site-directed mutagenesis study of yeast peptide:N-glycanase. Insight into the reaction mechanism of deglycosylation.</title>
        <authorList>
            <person name="Katiyar S."/>
            <person name="Suzuki T."/>
            <person name="Balgobin B.J."/>
            <person name="Lennarz W.J."/>
        </authorList>
    </citation>
    <scope>BIOPHYSICOCHEMICAL PROPERTIES</scope>
    <scope>MUTAGENESIS OF TRP-123; CYS-129; CYS-132; CYS-165; CYS-168; PHE-174; TYR-177; ARG-187; GLY-189; CYS-191; TRP-194; PHE-198; THR-199; LYS-203; GLY-206; ARG-210; VAL-212; HIS-218; TRP-220; GLU-222; PHE-224; ARG-230; VAL-234; ASP-235; ASP-242; TRP-251; LYS-253; TYR-257; PHE-261; ASP-264; VAL-266; ASP-268; TYR-273; ARG-281; ARG-347; TRP-354 AND ARG-358</scope>
</reference>
<reference key="6">
    <citation type="journal article" date="2003" name="Biochem. J.">
        <title>Free-oligosaccharide control in the yeast Saccharomyces cerevisiae: roles for peptide:N-glycanase (Png1p) and vacuolar mannosidase (Ams1p).</title>
        <authorList>
            <person name="Chantret I."/>
            <person name="Frenoy J.-P."/>
            <person name="Moore S.E.H."/>
        </authorList>
    </citation>
    <scope>FUNCTION</scope>
</reference>
<reference key="7">
    <citation type="journal article" date="2003" name="EMBO J.">
        <title>A role for N-glycanase in the cytosolic turnover of glycoproteins.</title>
        <authorList>
            <person name="Hirsch C."/>
            <person name="Blom D."/>
            <person name="Ploegh H.L."/>
        </authorList>
    </citation>
    <scope>FUNCTION</scope>
</reference>
<reference key="8">
    <citation type="journal article" date="2003" name="Nature">
        <title>Global analysis of protein localization in budding yeast.</title>
        <authorList>
            <person name="Huh W.-K."/>
            <person name="Falvo J.V."/>
            <person name="Gerke L.C."/>
            <person name="Carroll A.S."/>
            <person name="Howson R.W."/>
            <person name="Weissman J.S."/>
            <person name="O'Shea E.K."/>
        </authorList>
    </citation>
    <scope>SUBCELLULAR LOCATION [LARGE SCALE ANALYSIS]</scope>
</reference>
<reference key="9">
    <citation type="journal article" date="2003" name="Nature">
        <title>Global analysis of protein expression in yeast.</title>
        <authorList>
            <person name="Ghaemmaghami S."/>
            <person name="Huh W.-K."/>
            <person name="Bower K."/>
            <person name="Howson R.W."/>
            <person name="Belle A."/>
            <person name="Dephoure N."/>
            <person name="O'Shea E.K."/>
            <person name="Weissman J.S."/>
        </authorList>
    </citation>
    <scope>LEVEL OF PROTEIN EXPRESSION [LARGE SCALE ANALYSIS]</scope>
</reference>
<reference key="10">
    <citation type="journal article" date="2004" name="Biochem. Biophys. Res. Commun.">
        <title>The N-terminus of yeast peptide: N-glycanase interacts with the DNA repair protein Rad23.</title>
        <authorList>
            <person name="Biswas S."/>
            <person name="Katiyar S."/>
            <person name="Li G."/>
            <person name="Zhou X."/>
            <person name="Lennarz W.J."/>
            <person name="Schindelin H."/>
        </authorList>
    </citation>
    <scope>INTERACTION WITH RAD23</scope>
</reference>
<reference key="11">
    <citation type="journal article" date="2004" name="EMBO Rep.">
        <title>Yeast N-glycanase distinguishes between native and non-native glycoproteins.</title>
        <authorList>
            <person name="Hirsch C."/>
            <person name="Misaghi S."/>
            <person name="Blom D."/>
            <person name="Pacold M.E."/>
            <person name="Ploegh H.L."/>
        </authorList>
    </citation>
    <scope>FUNCTION</scope>
</reference>
<reference key="12">
    <citation type="journal article" date="2004" name="Chem. Biol.">
        <title>Using a small molecule inhibitor of peptide: N-glycanase to probe its role in glycoprotein turnover.</title>
        <authorList>
            <person name="Misaghi S."/>
            <person name="Pacold M.E."/>
            <person name="Blom D."/>
            <person name="Ploegh H.L."/>
            <person name="Korbel G.A."/>
        </authorList>
    </citation>
    <scope>MASS SPECTROMETRY</scope>
    <scope>ACTIVITY REGULATION</scope>
</reference>
<reference key="13">
    <citation type="journal article" date="2005" name="FEBS Lett.">
        <title>Misfolding of glycoproteins is a prerequisite for peptide: N-glycanase mediated deglycosylation.</title>
        <authorList>
            <person name="Joshi S."/>
            <person name="Katiyar S."/>
            <person name="Lennarz W.J."/>
        </authorList>
    </citation>
    <scope>FUNCTION</scope>
</reference>
<reference key="14">
    <citation type="journal article" date="2006" name="J. Biol. Chem.">
        <title>Site-specific labeling of cytoplasmic peptide: N-glycanase by N,N'-diacetylchitobiose-related compounds.</title>
        <authorList>
            <person name="Suzuki T."/>
            <person name="Hara I."/>
            <person name="Nakano M."/>
            <person name="Zhao G."/>
            <person name="Lennarz W.J."/>
            <person name="Schindelin H."/>
            <person name="Taniguchi N."/>
            <person name="Totani K."/>
            <person name="Matsuo I."/>
            <person name="Ito Y."/>
        </authorList>
    </citation>
    <scope>ACTIVITY REGULATION</scope>
</reference>
<reference key="15">
    <citation type="journal article" date="2006" name="J. Cell Biol.">
        <title>The Png1-Rad23 complex regulates glycoprotein turnover.</title>
        <authorList>
            <person name="Kim I."/>
            <person name="Ahn J."/>
            <person name="Liu C."/>
            <person name="Tanabe K."/>
            <person name="Apodaca J."/>
            <person name="Suzuki T."/>
            <person name="Rao H."/>
        </authorList>
    </citation>
    <scope>FUNCTION</scope>
</reference>
<reference key="16">
    <citation type="journal article" date="2006" name="Cell Death Differ.">
        <title>z-VAD-fmk inhibits peptide:N-glycanase and may result in ER stress.</title>
        <authorList>
            <person name="Misaghi S."/>
            <person name="Korbel G.A."/>
            <person name="Kessler B."/>
            <person name="Spooner E."/>
            <person name="Ploegh H.L."/>
        </authorList>
    </citation>
    <scope>ACTIVITY REGULATION</scope>
</reference>
<reference key="17">
    <citation type="journal article" date="2005" name="Proc. Natl. Acad. Sci. U.S.A.">
        <title>Structure of a peptide:N-glycanase-Rad23 complex: insight into the deglycosylation for denatured glycoproteins.</title>
        <authorList>
            <person name="Lee J.-H."/>
            <person name="Choi J.M."/>
            <person name="Lee C."/>
            <person name="Yi K.J."/>
            <person name="Cho Y."/>
        </authorList>
    </citation>
    <scope>X-RAY CRYSTALLOGRAPHY (2.8 ANGSTROMS) OF 8-342 IN COMPLEX WITH RAD23 AND SUCROSE</scope>
    <scope>COFACTOR</scope>
    <scope>ZINC-BINDING</scope>
</reference>
<comment type="function">
    <text evidence="2 5 6 8 11 14">Specifically deglycosylates the denatured form of N-linked glycoproteins in the cytoplasm and assists their proteasome-mediated degradation. Cleaves the beta-aspartyl-glucosamine (GlcNAc) of the glycan and the amide side chain of Asn, converting Asn to Asp. Prefers proteins containing high-mannose over those bearing complex type oligosaccharides. Can recognize misfolded proteins in the endoplasmic reticulum that are exported to the cytosol to be destroyed and deglycosylate them, while it has no activity toward native proteins. Deglycosylation is a prerequisite for subsequent proteasome-mediated degradation of some, but not all, misfolded glycoproteins. Involved in the formation of free oligosaccharide in cytosol.</text>
</comment>
<comment type="catalytic activity">
    <reaction>
        <text>Hydrolysis of an N(4)-(acetyl-beta-D-glucosaminyl)asparagine residue in which the glucosamine residue may be further glycosylated, to yield a (substituted) N-acetyl-beta-D-glucosaminylamine and a peptide containing an aspartate residue.</text>
        <dbReference type="EC" id="3.5.1.52"/>
    </reaction>
</comment>
<comment type="cofactor">
    <cofactor evidence="12">
        <name>Zn(2+)</name>
        <dbReference type="ChEBI" id="CHEBI:29105"/>
    </cofactor>
    <text evidence="12">Binds 1 zinc ion per subunit.</text>
</comment>
<comment type="activity regulation">
    <text evidence="10 13 15">Inhibited by Z-VAD-fmk, a well-known caspase inhibitor. Also inhibited by Man9GlcNAc2-iodoacetoamide. Both molecules inhibit enzyme activity through covalent binding of the carbohydrate to the single Cys-191 residue.</text>
</comment>
<comment type="biophysicochemical properties">
    <kinetics>
        <KM evidence="4">210 uM for asialofetuin</KM>
        <Vmax evidence="4">140.0 nmol/min/mg enzyme with asialofetuin as substrate</Vmax>
    </kinetics>
</comment>
<comment type="subunit">
    <text evidence="3 9 12">Interacts with RAD23 subunit of 26S proteasome.</text>
</comment>
<comment type="interaction">
    <interactant intactId="EBI-38139">
        <id>Q02890</id>
    </interactant>
    <interactant intactId="EBI-14668">
        <id>P32628</id>
        <label>RAD23</label>
    </interactant>
    <organismsDiffer>false</organismsDiffer>
    <experiments>4</experiments>
</comment>
<comment type="subcellular location">
    <subcellularLocation>
        <location>Cytoplasm</location>
    </subcellularLocation>
    <subcellularLocation>
        <location>Nucleus</location>
    </subcellularLocation>
</comment>
<comment type="mass spectrometry" mass="43208.0" method="MALDI" evidence="10"/>
<comment type="miscellaneous">
    <text evidence="7">Present with 4850 molecules/cell in log phase SD medium.</text>
</comment>
<comment type="similarity">
    <text evidence="16">Belongs to the transglutaminase-like superfamily. PNGase family.</text>
</comment>
<organism>
    <name type="scientific">Saccharomyces cerevisiae (strain ATCC 204508 / S288c)</name>
    <name type="common">Baker's yeast</name>
    <dbReference type="NCBI Taxonomy" id="559292"/>
    <lineage>
        <taxon>Eukaryota</taxon>
        <taxon>Fungi</taxon>
        <taxon>Dikarya</taxon>
        <taxon>Ascomycota</taxon>
        <taxon>Saccharomycotina</taxon>
        <taxon>Saccharomycetes</taxon>
        <taxon>Saccharomycetales</taxon>
        <taxon>Saccharomycetaceae</taxon>
        <taxon>Saccharomyces</taxon>
    </lineage>
</organism>
<gene>
    <name type="primary">PNG1</name>
    <name type="ordered locus">YPL096W</name>
</gene>
<protein>
    <recommendedName>
        <fullName>Peptide-N(4)-(N-acetyl-beta-glucosaminyl)asparagine amidase</fullName>
        <shortName>PNGase</shortName>
        <ecNumber>3.5.1.52</ecNumber>
    </recommendedName>
    <alternativeName>
        <fullName>Peptide:N-glycanase 1</fullName>
        <shortName>yPNG1</shortName>
    </alternativeName>
</protein>
<accession>Q02890</accession>
<accession>D6W3S1</accession>
<proteinExistence type="evidence at protein level"/>
<evidence type="ECO:0000256" key="1">
    <source>
        <dbReference type="SAM" id="MobiDB-lite"/>
    </source>
</evidence>
<evidence type="ECO:0000269" key="2">
    <source>
    </source>
</evidence>
<evidence type="ECO:0000269" key="3">
    <source>
    </source>
</evidence>
<evidence type="ECO:0000269" key="4">
    <source>
    </source>
</evidence>
<evidence type="ECO:0000269" key="5">
    <source>
    </source>
</evidence>
<evidence type="ECO:0000269" key="6">
    <source>
    </source>
</evidence>
<evidence type="ECO:0000269" key="7">
    <source>
    </source>
</evidence>
<evidence type="ECO:0000269" key="8">
    <source>
    </source>
</evidence>
<evidence type="ECO:0000269" key="9">
    <source>
    </source>
</evidence>
<evidence type="ECO:0000269" key="10">
    <source>
    </source>
</evidence>
<evidence type="ECO:0000269" key="11">
    <source>
    </source>
</evidence>
<evidence type="ECO:0000269" key="12">
    <source>
    </source>
</evidence>
<evidence type="ECO:0000269" key="13">
    <source>
    </source>
</evidence>
<evidence type="ECO:0000269" key="14">
    <source>
    </source>
</evidence>
<evidence type="ECO:0000269" key="15">
    <source>
    </source>
</evidence>
<evidence type="ECO:0000305" key="16"/>
<evidence type="ECO:0007829" key="17">
    <source>
        <dbReference type="PDB" id="1X3W"/>
    </source>
</evidence>
<evidence type="ECO:0007829" key="18">
    <source>
        <dbReference type="PDB" id="1X3Z"/>
    </source>
</evidence>
<evidence type="ECO:0007829" key="19">
    <source>
        <dbReference type="PDB" id="3ESW"/>
    </source>
</evidence>